<feature type="signal peptide" evidence="7">
    <location>
        <begin position="1"/>
        <end position="19"/>
    </location>
</feature>
<feature type="chain" id="PRO_5035544067" description="Hexamerin 70c" evidence="7">
    <location>
        <begin position="20"/>
        <end position="686"/>
    </location>
</feature>
<feature type="domain" description="Hemocyanin N-terminal" evidence="1">
    <location>
        <begin position="32"/>
        <end position="155"/>
    </location>
</feature>
<feature type="domain" description="Hemocyanin middle" evidence="1">
    <location>
        <begin position="161"/>
        <end position="431"/>
    </location>
</feature>
<feature type="domain" description="Hemocyanin C-terminal" evidence="1">
    <location>
        <begin position="440"/>
        <end position="676"/>
    </location>
</feature>
<feature type="glycosylation site" description="N-linked (GlcNAc...) asparagine" evidence="2">
    <location>
        <position position="205"/>
    </location>
</feature>
<feature type="glycosylation site" description="N-linked (GlcNAc...) asparagine" evidence="2">
    <location>
        <position position="662"/>
    </location>
</feature>
<feature type="sequence conflict" description="In Ref. 2; ABR45905." evidence="10" ref="2">
    <original>N</original>
    <variation>Y</variation>
    <location>
        <position position="210"/>
    </location>
</feature>
<feature type="sequence conflict" description="In Ref. 2; ABR45905." evidence="10" ref="2">
    <original>S</original>
    <variation>N</variation>
    <location>
        <position position="371"/>
    </location>
</feature>
<feature type="sequence conflict" description="In Ref. 2; ABR45905." evidence="10" ref="2">
    <original>N</original>
    <variation>K</variation>
    <location>
        <position position="426"/>
    </location>
</feature>
<comment type="function">
    <text evidence="11">Storage protein that may function as a nutrient supply to compensate for lack of dietary proteins during metamorphosis and egg production.</text>
</comment>
<comment type="subunit">
    <text evidence="10">Probable homohexamer.</text>
</comment>
<comment type="subcellular location">
    <subcellularLocation>
        <location evidence="5">Secreted</location>
    </subcellularLocation>
    <subcellularLocation>
        <location evidence="5">Nucleus</location>
    </subcellularLocation>
    <subcellularLocation>
        <location evidence="5">Cytoplasm</location>
    </subcellularLocation>
    <subcellularLocation>
        <location evidence="5">Cytoplasmic granule</location>
    </subcellularLocation>
    <text evidence="5">Localizes in foci within the cytoplasm of some cells of the fat body; these are probably cytoplasmic granules formed by endocytosis of hexamerins.</text>
</comment>
<comment type="tissue specificity">
    <text evidence="4 5">Expressed in the fat body and secreted into the hemolymph (at protein level) (PubMed:26466725). Present in trophocytes and oenocytes of the fat body (at protein level) (PubMed:26466725). Not expressed in ovary or testis (PubMed:20346164).</text>
</comment>
<comment type="developmental stage">
    <text evidence="3 4 5 6 7">Expressed in the fat body of 5th instar larvae up to pupation but protein persists up to eclosion (at protein level) (PubMed:20346164, PubMed:26466725). Present in the hemolymph from 5th larval instar until just before eclosion (at protein level); Levels in the hemolymph may be regulated through resorption and sequestration in the fat body (PubMed:16055147, PubMed:26466725, PubMed:9692239). Expressed in the brains of 3rd and 4th instar larval queens and workers; expression in worker brains is significantly higher than in queen brains (PubMed:34309096). In workers expression in the brain decreases in 5th instar larvae while in queens it increases (PubMed:34309096).</text>
</comment>
<comment type="induction">
    <text evidence="4 6">In 5th instar larvae induced by juvenile hormone (PubMed:20346164). May be post-transcriptionally repressed by miRNA (PubMed:34309096).</text>
</comment>
<comment type="miscellaneous">
    <text evidence="10">Hexamerins are evolutionarily related to hemocyanins but do not bind copper and have lost the ability to bind oxygen.</text>
</comment>
<comment type="similarity">
    <text evidence="10">Belongs to the hemocyanin/hexamerin family.</text>
</comment>
<sequence>MLSKVVLLVALAAICGAQGASYAGRHTADMDFLHKQKKIFDLLLYVRQADLSDAEWYDVGRNYDMESNMDMYKDKNVVQKFLWWYKQGMFLSRNAIFTPLNSEQKYEVRMLFELLYNAKDFQTFYKTAAWARLRMNSGMFTTAFSIAVLYRPDTKYMKFPAIYEIYPNYFFDSSVIEEAQNLKMSRGSSVVTGMNNIETYIVNTNYSSKNMREYNDPEYKLDYFMEDVELNAYYYYMREMLPYWMSSSQYHMPKEIRGQLYYFLHKQLMTRYFLERMSNDLGKTAEFDWNKPINSGFYSTIMYSNGVTFPQRNRFSSLPYYKYKYLNVINALEMRLMDAIDSGYLIDEYGKKIDIYTPEGLNMLGNVIEGSSDSINTKFYGMYDILARDILGYNFDFQNKNNLIPSALQSYSTSMRDPAFYMLYQNILSYFLRYKKLQPQYSQSELQMPGVKFESVNIDKLYTYFDKCDTLINNAVAVENFKGGMYLRLKARRACMNYERFTYKININSDKETKGMMRIFLGPAFDEIKHDMVYLQKYFYLFMEMDRFAVTLRPGSNSIERQSSESPFTTSTIMPSDIFYDKLNKAIGGSEPFTYSEKMLGFPERLILPRGKPEGMRYKMFFFLSSMDESNTKSYEIPLYGKMTLDDKVFGFPLDRPMWAWNFTIPNMYFKDVFIYNRPNEESMNY</sequence>
<keyword id="KW-0963">Cytoplasm</keyword>
<keyword id="KW-0903">Direct protein sequencing</keyword>
<keyword id="KW-0325">Glycoprotein</keyword>
<keyword id="KW-0539">Nucleus</keyword>
<keyword id="KW-1185">Reference proteome</keyword>
<keyword id="KW-0964">Secreted</keyword>
<keyword id="KW-0732">Signal</keyword>
<keyword id="KW-0758">Storage protein</keyword>
<organism evidence="15 16">
    <name type="scientific">Apis mellifera</name>
    <name type="common">Honeybee</name>
    <dbReference type="NCBI Taxonomy" id="7460"/>
    <lineage>
        <taxon>Eukaryota</taxon>
        <taxon>Metazoa</taxon>
        <taxon>Ecdysozoa</taxon>
        <taxon>Arthropoda</taxon>
        <taxon>Hexapoda</taxon>
        <taxon>Insecta</taxon>
        <taxon>Pterygota</taxon>
        <taxon>Neoptera</taxon>
        <taxon>Endopterygota</taxon>
        <taxon>Hymenoptera</taxon>
        <taxon>Apocrita</taxon>
        <taxon>Aculeata</taxon>
        <taxon>Apoidea</taxon>
        <taxon>Anthophila</taxon>
        <taxon>Apidae</taxon>
        <taxon>Apis</taxon>
    </lineage>
</organism>
<evidence type="ECO:0000255" key="1"/>
<evidence type="ECO:0000255" key="2">
    <source>
        <dbReference type="PROSITE-ProRule" id="PRU00498"/>
    </source>
</evidence>
<evidence type="ECO:0000269" key="3">
    <source>
    </source>
</evidence>
<evidence type="ECO:0000269" key="4">
    <source>
    </source>
</evidence>
<evidence type="ECO:0000269" key="5">
    <source>
    </source>
</evidence>
<evidence type="ECO:0000269" key="6">
    <source>
    </source>
</evidence>
<evidence type="ECO:0000269" key="7">
    <source>
    </source>
</evidence>
<evidence type="ECO:0000303" key="8">
    <source>
    </source>
</evidence>
<evidence type="ECO:0000303" key="9">
    <source>
    </source>
</evidence>
<evidence type="ECO:0000305" key="10"/>
<evidence type="ECO:0000305" key="11">
    <source>
    </source>
</evidence>
<evidence type="ECO:0000312" key="12">
    <source>
        <dbReference type="EMBL" id="ABQ84439.1"/>
    </source>
</evidence>
<evidence type="ECO:0000312" key="13">
    <source>
        <dbReference type="EMBL" id="ABR45905.1"/>
    </source>
</evidence>
<evidence type="ECO:0000312" key="14">
    <source>
        <dbReference type="EnsemblMetazoa" id="NP_001092187"/>
    </source>
</evidence>
<evidence type="ECO:0000312" key="15">
    <source>
        <dbReference type="Proteomes" id="UP000005203"/>
    </source>
</evidence>
<evidence type="ECO:0000312" key="16">
    <source>
        <dbReference type="Proteomes" id="UP001105180"/>
    </source>
</evidence>
<evidence type="ECO:0000312" key="17">
    <source>
        <dbReference type="RefSeq" id="NP_001092187.1"/>
    </source>
</evidence>
<dbReference type="EMBL" id="EF625898">
    <property type="protein sequence ID" value="ABR45905.1"/>
    <property type="molecule type" value="mRNA"/>
</dbReference>
<dbReference type="EMBL" id="EF589162">
    <property type="protein sequence ID" value="ABQ84439.1"/>
    <property type="molecule type" value="mRNA"/>
</dbReference>
<dbReference type="RefSeq" id="NP_001092187.1">
    <property type="nucleotide sequence ID" value="NM_001098717.1"/>
</dbReference>
<dbReference type="PaxDb" id="7460-GB51696-PA"/>
<dbReference type="EnsemblMetazoa" id="NM_001098717">
    <property type="protein sequence ID" value="NP_001092187"/>
    <property type="gene ID" value="GeneID_409354"/>
</dbReference>
<dbReference type="GeneID" id="409354"/>
<dbReference type="KEGG" id="ame:409354"/>
<dbReference type="CTD" id="409354"/>
<dbReference type="eggNOG" id="ENOG502QR98">
    <property type="taxonomic scope" value="Eukaryota"/>
</dbReference>
<dbReference type="HOGENOM" id="CLU_012213_1_0_1"/>
<dbReference type="OMA" id="MRIFLGP"/>
<dbReference type="OrthoDB" id="5406463at2759"/>
<dbReference type="Proteomes" id="UP000005203">
    <property type="component" value="Linkage group LG8"/>
</dbReference>
<dbReference type="Proteomes" id="UP001105180">
    <property type="component" value="Linkage Group LG8"/>
</dbReference>
<dbReference type="GO" id="GO:0005737">
    <property type="term" value="C:cytoplasm"/>
    <property type="evidence" value="ECO:0007669"/>
    <property type="project" value="UniProtKB-SubCell"/>
</dbReference>
<dbReference type="GO" id="GO:0005576">
    <property type="term" value="C:extracellular region"/>
    <property type="evidence" value="ECO:0007669"/>
    <property type="project" value="UniProtKB-SubCell"/>
</dbReference>
<dbReference type="GO" id="GO:0005634">
    <property type="term" value="C:nucleus"/>
    <property type="evidence" value="ECO:0007669"/>
    <property type="project" value="UniProtKB-SubCell"/>
</dbReference>
<dbReference type="GO" id="GO:0045735">
    <property type="term" value="F:nutrient reservoir activity"/>
    <property type="evidence" value="ECO:0007669"/>
    <property type="project" value="UniProtKB-KW"/>
</dbReference>
<dbReference type="Gene3D" id="1.10.1280.10">
    <property type="entry name" value="Di-copper center containing domain from catechol oxidase"/>
    <property type="match status" value="1"/>
</dbReference>
<dbReference type="Gene3D" id="2.60.40.1520">
    <property type="entry name" value="Hemocyanin, C-terminal domain"/>
    <property type="match status" value="1"/>
</dbReference>
<dbReference type="Gene3D" id="1.20.1370.10">
    <property type="entry name" value="Hemocyanin, N-terminal domain"/>
    <property type="match status" value="1"/>
</dbReference>
<dbReference type="InterPro" id="IPR008922">
    <property type="entry name" value="Di-copper_centre_dom_sf"/>
</dbReference>
<dbReference type="InterPro" id="IPR013788">
    <property type="entry name" value="Hemocyanin/hexamerin"/>
</dbReference>
<dbReference type="InterPro" id="IPR000896">
    <property type="entry name" value="Hemocyanin/hexamerin_mid_dom"/>
</dbReference>
<dbReference type="InterPro" id="IPR005203">
    <property type="entry name" value="Hemocyanin_C"/>
</dbReference>
<dbReference type="InterPro" id="IPR037020">
    <property type="entry name" value="Hemocyanin_C_sf"/>
</dbReference>
<dbReference type="InterPro" id="IPR005204">
    <property type="entry name" value="Hemocyanin_N"/>
</dbReference>
<dbReference type="InterPro" id="IPR036697">
    <property type="entry name" value="Hemocyanin_N_sf"/>
</dbReference>
<dbReference type="InterPro" id="IPR014756">
    <property type="entry name" value="Ig_E-set"/>
</dbReference>
<dbReference type="PANTHER" id="PTHR11511:SF5">
    <property type="entry name" value="FAT-BODY PROTEIN 1-RELATED"/>
    <property type="match status" value="1"/>
</dbReference>
<dbReference type="PANTHER" id="PTHR11511">
    <property type="entry name" value="LARVAL STORAGE PROTEIN/PHENOLOXIDASE"/>
    <property type="match status" value="1"/>
</dbReference>
<dbReference type="Pfam" id="PF03723">
    <property type="entry name" value="Hemocyanin_C"/>
    <property type="match status" value="1"/>
</dbReference>
<dbReference type="Pfam" id="PF00372">
    <property type="entry name" value="Hemocyanin_M"/>
    <property type="match status" value="1"/>
</dbReference>
<dbReference type="Pfam" id="PF03722">
    <property type="entry name" value="Hemocyanin_N"/>
    <property type="match status" value="1"/>
</dbReference>
<dbReference type="PRINTS" id="PR00187">
    <property type="entry name" value="HAEMOCYANIN"/>
</dbReference>
<dbReference type="SUPFAM" id="SSF48056">
    <property type="entry name" value="Di-copper centre-containing domain"/>
    <property type="match status" value="1"/>
</dbReference>
<dbReference type="SUPFAM" id="SSF81296">
    <property type="entry name" value="E set domains"/>
    <property type="match status" value="1"/>
</dbReference>
<dbReference type="SUPFAM" id="SSF48050">
    <property type="entry name" value="Hemocyanin, N-terminal domain"/>
    <property type="match status" value="1"/>
</dbReference>
<dbReference type="PROSITE" id="PS00210">
    <property type="entry name" value="HEMOCYANIN_2"/>
    <property type="match status" value="1"/>
</dbReference>
<accession>A0A8U1C2Y4</accession>
<accession>A0A8B6WZ79</accession>
<accession>A5YV87</accession>
<accession>A6YLP8</accession>
<name>HEX7C_APIME</name>
<protein>
    <recommendedName>
        <fullName evidence="9">Hexamerin 70c</fullName>
    </recommendedName>
    <alternativeName>
        <fullName evidence="8">Arylphorin Hex70c</fullName>
    </alternativeName>
</protein>
<reference evidence="10" key="1">
    <citation type="journal article" date="2010" name="BMC Mol. Biol.">
        <title>The four hexamerin genes in the honey bee: structure, molecular evolution and function deduced from expression patterns in queens, workers and drones.</title>
        <authorList>
            <person name="Martins J.R."/>
            <person name="Nunes F.M."/>
            <person name="Cristino A.S."/>
            <person name="Simoes Z.L."/>
            <person name="Bitondi M.M."/>
        </authorList>
    </citation>
    <scope>NUCLEOTIDE SEQUENCE [MRNA]</scope>
    <scope>TISSUE SPECIFICITY</scope>
    <scope>DEVELOPMENTAL STAGE</scope>
    <scope>INDUCTION BY JUVENILE HORMONE</scope>
</reference>
<reference evidence="13" key="2">
    <citation type="submission" date="2007-05" db="EMBL/GenBank/DDBJ databases">
        <title>Hexamerins in Apis mellifera.</title>
        <authorList>
            <person name="Wheeler D.E."/>
            <person name="Buck N.A."/>
        </authorList>
    </citation>
    <scope>NUCLEOTIDE SEQUENCE [MRNA]</scope>
</reference>
<reference evidence="12" key="3">
    <citation type="submission" date="2007-05" db="EMBL/GenBank/DDBJ databases">
        <title>Molecular cloning and sequencing of a cDNA for the hexamerin 70c from Apis mellifera.</title>
        <authorList>
            <person name="Martins J.R."/>
            <person name="Nunes F.M.F."/>
            <person name="Bitondi M.M.G."/>
        </authorList>
    </citation>
    <scope>NUCLEOTIDE SEQUENCE [MRNA]</scope>
</reference>
<reference evidence="17" key="4">
    <citation type="journal article" date="2006" name="Nature">
        <title>Insights into social insects from the genome of the honeybee Apis mellifera.</title>
        <authorList>
            <consortium name="Honeybee genome sequencing consortium"/>
        </authorList>
    </citation>
    <scope>NUCLEOTIDE SEQUENCE [LARGE SCALE GENOMIC DNA]</scope>
</reference>
<reference evidence="17" key="5">
    <citation type="journal article" date="2014" name="BMC Genomics">
        <title>Finding the missing honey bee genes: lessons learned from a genome upgrade.</title>
        <authorList>
            <consortium name="HGSC production teams"/>
            <consortium name="Honey Bee Genome Sequencing Consortium"/>
            <person name="Elsik C.G."/>
            <person name="Worley K.C."/>
            <person name="Bennett A.K."/>
            <person name="Beye M."/>
            <person name="Camara F."/>
            <person name="Childers C.P."/>
            <person name="de Graaf D.C."/>
            <person name="Debyser G."/>
            <person name="Deng J."/>
            <person name="Devreese B."/>
            <person name="Elhaik E."/>
            <person name="Evans J.D."/>
            <person name="Foster L.J."/>
            <person name="Graur D."/>
            <person name="Guigo R."/>
            <person name="Hoff K.J."/>
            <person name="Holder M.E."/>
            <person name="Hudson M.E."/>
            <person name="Hunt G.J."/>
            <person name="Jiang H."/>
            <person name="Joshi V."/>
            <person name="Khetani R.S."/>
            <person name="Kosarev P."/>
            <person name="Kovar C.L."/>
            <person name="Ma J."/>
            <person name="Maleszka R."/>
            <person name="Moritz R.F."/>
            <person name="Munoz-Torres M.C."/>
            <person name="Murphy T.D."/>
            <person name="Muzny D.M."/>
            <person name="Newsham I.F."/>
            <person name="Reese J.T."/>
            <person name="Robertson H.M."/>
            <person name="Robinson G.E."/>
            <person name="Rueppell O."/>
            <person name="Solovyev V."/>
            <person name="Stanke M."/>
            <person name="Stolle E."/>
            <person name="Tsuruda J.M."/>
            <person name="Vaerenbergh M.V."/>
            <person name="Waterhouse R.M."/>
            <person name="Weaver D.B."/>
            <person name="Whitfield C.W."/>
            <person name="Wu Y."/>
            <person name="Zdobnov E.M."/>
            <person name="Zhang L."/>
            <person name="Zhu D."/>
            <person name="Gibbs R.A."/>
        </authorList>
    </citation>
    <scope>NUCLEOTIDE SEQUENCE [LARGE SCALE GENOMIC DNA]</scope>
</reference>
<reference evidence="10" key="6">
    <citation type="journal article" date="1998" name="Insect Biochem. Mol. Biol.">
        <title>Identification and developmental profiles of hexamerins in antenna and hemolymph of the honeybee, Apis mellifera.</title>
        <authorList>
            <person name="Danty E."/>
            <person name="Arnold G."/>
            <person name="Burmester T."/>
            <person name="Huet J.C."/>
            <person name="Huet D."/>
            <person name="Pernollet J.C."/>
            <person name="Masson C."/>
        </authorList>
    </citation>
    <scope>PROTEIN SEQUENCE OF 20-34</scope>
    <scope>DEVELOPMENTAL STAGE</scope>
    <scope>PROTEOLYTIC CLEAVAGE</scope>
</reference>
<reference evidence="10" key="7">
    <citation type="journal article" date="2005" name="J. Insect Physiol.">
        <title>Molecular cloning and expression of a hexamerin cDNA from the honey bee, Apis mellifera.</title>
        <authorList>
            <person name="Cunha A.D."/>
            <person name="Nascimento A.M."/>
            <person name="Guidugli K.R."/>
            <person name="Simoes Z.L."/>
            <person name="Bitondi M.M."/>
        </authorList>
    </citation>
    <scope>DEVELOPMENTAL STAGE</scope>
</reference>
<reference evidence="10" key="8">
    <citation type="journal article" date="2012" name="Insects">
        <title>Nuclear Immunolocalization of Hexamerins in the Fat Body of Metamorphosing Honey Bees.</title>
        <authorList>
            <person name="Martins J.R."/>
            <person name="Bitondi M.M."/>
        </authorList>
    </citation>
    <scope>FUNCTION</scope>
    <scope>SUBCELLULAR LOCATION</scope>
    <scope>TISSUE SPECIFICITY</scope>
    <scope>DEVELOPMENTAL STAGE</scope>
</reference>
<reference evidence="10" key="9">
    <citation type="journal article" date="2021" name="Insect Mol. Biol.">
        <title>miRNA-34 and miRNA-210 target hexamerin genes enhancing their differential expression during early brain development of honeybee (Apis mellifera) castes.</title>
        <authorList>
            <person name="Vieira J."/>
            <person name="Freitas F.C.P."/>
            <person name="Cristino A.S."/>
            <person name="Moda L.M.R."/>
            <person name="Martins J.R."/>
            <person name="Bitondi M.M.G."/>
            <person name="Simoes Z.L.P."/>
            <person name="Barchuk A.R."/>
        </authorList>
    </citation>
    <scope>DEVELOPMENTAL STAGE</scope>
    <scope>INDUCTION BY MIRNA</scope>
</reference>
<gene>
    <name evidence="9 17" type="primary">Hex70c</name>
    <name evidence="14" type="synonym">409354</name>
</gene>
<proteinExistence type="evidence at protein level"/>